<protein>
    <recommendedName>
        <fullName evidence="1">ATP phosphoribosyltransferase</fullName>
        <shortName evidence="1">ATP-PRT</shortName>
        <shortName evidence="1">ATP-PRTase</shortName>
        <ecNumber evidence="1">2.4.2.17</ecNumber>
    </recommendedName>
</protein>
<sequence length="214" mass="23499">MSKTLTIALSKGRILGETLPLLEKANIVPVEDISKSRKLIFDTNHEHIKLVILRATDVPTYVDHGVADFGVAGKDVLMEASTKNLYELLDLKIAKCRLMTAGVVGQPLPNRRLKVASKFIKTAKAYFAEQGIQADVIKLYGAMELAPIMGLADLIVDIVDTGNTLKANGLEARELIAPISTRLVVNKAAYKTKYSEIEPILEMIRRAVEDNEGK</sequence>
<gene>
    <name evidence="1" type="primary">hisG</name>
    <name type="ordered locus">Mmwyl1_2407</name>
</gene>
<reference key="1">
    <citation type="submission" date="2007-06" db="EMBL/GenBank/DDBJ databases">
        <title>Complete sequence of Marinomonas sp. MWYL1.</title>
        <authorList>
            <consortium name="US DOE Joint Genome Institute"/>
            <person name="Copeland A."/>
            <person name="Lucas S."/>
            <person name="Lapidus A."/>
            <person name="Barry K."/>
            <person name="Glavina del Rio T."/>
            <person name="Dalin E."/>
            <person name="Tice H."/>
            <person name="Pitluck S."/>
            <person name="Kiss H."/>
            <person name="Brettin T."/>
            <person name="Bruce D."/>
            <person name="Detter J.C."/>
            <person name="Han C."/>
            <person name="Schmutz J."/>
            <person name="Larimer F."/>
            <person name="Land M."/>
            <person name="Hauser L."/>
            <person name="Kyrpides N."/>
            <person name="Kim E."/>
            <person name="Johnston A.W.B."/>
            <person name="Todd J.D."/>
            <person name="Rogers R."/>
            <person name="Wexler M."/>
            <person name="Bond P.L."/>
            <person name="Li Y."/>
            <person name="Richardson P."/>
        </authorList>
    </citation>
    <scope>NUCLEOTIDE SEQUENCE [LARGE SCALE GENOMIC DNA]</scope>
    <source>
        <strain>MWYL1</strain>
    </source>
</reference>
<name>HIS1_MARMS</name>
<comment type="function">
    <text evidence="1">Catalyzes the condensation of ATP and 5-phosphoribose 1-diphosphate to form N'-(5'-phosphoribosyl)-ATP (PR-ATP). Has a crucial role in the pathway because the rate of histidine biosynthesis seems to be controlled primarily by regulation of HisG enzymatic activity.</text>
</comment>
<comment type="catalytic activity">
    <reaction evidence="1">
        <text>1-(5-phospho-beta-D-ribosyl)-ATP + diphosphate = 5-phospho-alpha-D-ribose 1-diphosphate + ATP</text>
        <dbReference type="Rhea" id="RHEA:18473"/>
        <dbReference type="ChEBI" id="CHEBI:30616"/>
        <dbReference type="ChEBI" id="CHEBI:33019"/>
        <dbReference type="ChEBI" id="CHEBI:58017"/>
        <dbReference type="ChEBI" id="CHEBI:73183"/>
        <dbReference type="EC" id="2.4.2.17"/>
    </reaction>
</comment>
<comment type="pathway">
    <text evidence="1">Amino-acid biosynthesis; L-histidine biosynthesis; L-histidine from 5-phospho-alpha-D-ribose 1-diphosphate: step 1/9.</text>
</comment>
<comment type="subunit">
    <text evidence="1">Heteromultimer composed of HisG and HisZ subunits.</text>
</comment>
<comment type="subcellular location">
    <subcellularLocation>
        <location evidence="1">Cytoplasm</location>
    </subcellularLocation>
</comment>
<comment type="domain">
    <text>Lacks the C-terminal regulatory region which is replaced by HisZ.</text>
</comment>
<comment type="similarity">
    <text evidence="1">Belongs to the ATP phosphoribosyltransferase family. Short subfamily.</text>
</comment>
<organism>
    <name type="scientific">Marinomonas sp. (strain MWYL1)</name>
    <dbReference type="NCBI Taxonomy" id="400668"/>
    <lineage>
        <taxon>Bacteria</taxon>
        <taxon>Pseudomonadati</taxon>
        <taxon>Pseudomonadota</taxon>
        <taxon>Gammaproteobacteria</taxon>
        <taxon>Oceanospirillales</taxon>
        <taxon>Oceanospirillaceae</taxon>
        <taxon>Marinomonas</taxon>
    </lineage>
</organism>
<keyword id="KW-0028">Amino-acid biosynthesis</keyword>
<keyword id="KW-0067">ATP-binding</keyword>
<keyword id="KW-0963">Cytoplasm</keyword>
<keyword id="KW-0328">Glycosyltransferase</keyword>
<keyword id="KW-0368">Histidine biosynthesis</keyword>
<keyword id="KW-0547">Nucleotide-binding</keyword>
<keyword id="KW-0808">Transferase</keyword>
<evidence type="ECO:0000255" key="1">
    <source>
        <dbReference type="HAMAP-Rule" id="MF_01018"/>
    </source>
</evidence>
<proteinExistence type="inferred from homology"/>
<feature type="chain" id="PRO_1000084157" description="ATP phosphoribosyltransferase">
    <location>
        <begin position="1"/>
        <end position="214"/>
    </location>
</feature>
<accession>A6VY00</accession>
<dbReference type="EC" id="2.4.2.17" evidence="1"/>
<dbReference type="EMBL" id="CP000749">
    <property type="protein sequence ID" value="ABR71329.1"/>
    <property type="molecule type" value="Genomic_DNA"/>
</dbReference>
<dbReference type="SMR" id="A6VY00"/>
<dbReference type="STRING" id="400668.Mmwyl1_2407"/>
<dbReference type="KEGG" id="mmw:Mmwyl1_2407"/>
<dbReference type="eggNOG" id="COG0040">
    <property type="taxonomic scope" value="Bacteria"/>
</dbReference>
<dbReference type="HOGENOM" id="CLU_038115_2_0_6"/>
<dbReference type="OrthoDB" id="9801867at2"/>
<dbReference type="UniPathway" id="UPA00031">
    <property type="reaction ID" value="UER00006"/>
</dbReference>
<dbReference type="GO" id="GO:0005737">
    <property type="term" value="C:cytoplasm"/>
    <property type="evidence" value="ECO:0007669"/>
    <property type="project" value="UniProtKB-SubCell"/>
</dbReference>
<dbReference type="GO" id="GO:0005524">
    <property type="term" value="F:ATP binding"/>
    <property type="evidence" value="ECO:0007669"/>
    <property type="project" value="UniProtKB-KW"/>
</dbReference>
<dbReference type="GO" id="GO:0003879">
    <property type="term" value="F:ATP phosphoribosyltransferase activity"/>
    <property type="evidence" value="ECO:0007669"/>
    <property type="project" value="UniProtKB-UniRule"/>
</dbReference>
<dbReference type="GO" id="GO:0000105">
    <property type="term" value="P:L-histidine biosynthetic process"/>
    <property type="evidence" value="ECO:0007669"/>
    <property type="project" value="UniProtKB-UniRule"/>
</dbReference>
<dbReference type="CDD" id="cd13595">
    <property type="entry name" value="PBP2_HisGs"/>
    <property type="match status" value="1"/>
</dbReference>
<dbReference type="FunFam" id="3.40.190.10:FF:000011">
    <property type="entry name" value="ATP phosphoribosyltransferase"/>
    <property type="match status" value="1"/>
</dbReference>
<dbReference type="Gene3D" id="3.40.190.10">
    <property type="entry name" value="Periplasmic binding protein-like II"/>
    <property type="match status" value="2"/>
</dbReference>
<dbReference type="HAMAP" id="MF_01018">
    <property type="entry name" value="HisG_Short"/>
    <property type="match status" value="1"/>
</dbReference>
<dbReference type="InterPro" id="IPR013820">
    <property type="entry name" value="ATP_PRibTrfase_cat"/>
</dbReference>
<dbReference type="InterPro" id="IPR018198">
    <property type="entry name" value="ATP_PRibTrfase_CS"/>
</dbReference>
<dbReference type="InterPro" id="IPR001348">
    <property type="entry name" value="ATP_PRibTrfase_HisG"/>
</dbReference>
<dbReference type="InterPro" id="IPR024893">
    <property type="entry name" value="ATP_PRibTrfase_HisG_short"/>
</dbReference>
<dbReference type="NCBIfam" id="TIGR00070">
    <property type="entry name" value="hisG"/>
    <property type="match status" value="1"/>
</dbReference>
<dbReference type="PANTHER" id="PTHR21403:SF8">
    <property type="entry name" value="ATP PHOSPHORIBOSYLTRANSFERASE"/>
    <property type="match status" value="1"/>
</dbReference>
<dbReference type="PANTHER" id="PTHR21403">
    <property type="entry name" value="ATP PHOSPHORIBOSYLTRANSFERASE ATP-PRTASE"/>
    <property type="match status" value="1"/>
</dbReference>
<dbReference type="Pfam" id="PF01634">
    <property type="entry name" value="HisG"/>
    <property type="match status" value="1"/>
</dbReference>
<dbReference type="SUPFAM" id="SSF53850">
    <property type="entry name" value="Periplasmic binding protein-like II"/>
    <property type="match status" value="1"/>
</dbReference>
<dbReference type="PROSITE" id="PS01316">
    <property type="entry name" value="ATP_P_PHORIBOSYLTR"/>
    <property type="match status" value="1"/>
</dbReference>